<accession>A7ZK27</accession>
<sequence>MSLNMFWFLPTHGDGHYLGTEEGSRPVDHGYLQQIAQAADRLGYTGVLIPTGRSCEDAWLVAASMIPVTQRLKFLVALRPSVTSPTVAARQAATLDRLSNGRALFNLVTGSDPQELAGDGVFLDHSERYEASAEFTQVWRRLLLGETVNFNGKHIHVRGAKLLFPPIQQPYPPLYFGGSSDVAQELAAEQVDLYLTWGEPPELVKEKIEQVRAKAAAHGRKIRFGIRLHVIVRETNDEAWQAAERLISHLDDETIAKAQAAFARTDSVGQQRMAALHNGKRDNLEISPNLWAGVGLVRGGAGTALVGDGPTVAARINEYAALGIDSFVLSGYPHLEEAYRVGELLFPHLDVAIPEIPQPQPLNPQGEAVANDFIPRKVAQS</sequence>
<gene>
    <name evidence="1" type="primary">ssuD</name>
    <name type="ordered locus">EcE24377A_1037</name>
</gene>
<feature type="chain" id="PRO_1000066819" description="Alkanesulfonate monooxygenase">
    <location>
        <begin position="1"/>
        <end position="381"/>
    </location>
</feature>
<reference key="1">
    <citation type="journal article" date="2008" name="J. Bacteriol.">
        <title>The pangenome structure of Escherichia coli: comparative genomic analysis of E. coli commensal and pathogenic isolates.</title>
        <authorList>
            <person name="Rasko D.A."/>
            <person name="Rosovitz M.J."/>
            <person name="Myers G.S.A."/>
            <person name="Mongodin E.F."/>
            <person name="Fricke W.F."/>
            <person name="Gajer P."/>
            <person name="Crabtree J."/>
            <person name="Sebaihia M."/>
            <person name="Thomson N.R."/>
            <person name="Chaudhuri R."/>
            <person name="Henderson I.R."/>
            <person name="Sperandio V."/>
            <person name="Ravel J."/>
        </authorList>
    </citation>
    <scope>NUCLEOTIDE SEQUENCE [LARGE SCALE GENOMIC DNA]</scope>
    <source>
        <strain>E24377A / ETEC</strain>
    </source>
</reference>
<organism>
    <name type="scientific">Escherichia coli O139:H28 (strain E24377A / ETEC)</name>
    <dbReference type="NCBI Taxonomy" id="331111"/>
    <lineage>
        <taxon>Bacteria</taxon>
        <taxon>Pseudomonadati</taxon>
        <taxon>Pseudomonadota</taxon>
        <taxon>Gammaproteobacteria</taxon>
        <taxon>Enterobacterales</taxon>
        <taxon>Enterobacteriaceae</taxon>
        <taxon>Escherichia</taxon>
    </lineage>
</organism>
<name>SSUD_ECO24</name>
<proteinExistence type="inferred from homology"/>
<evidence type="ECO:0000255" key="1">
    <source>
        <dbReference type="HAMAP-Rule" id="MF_01229"/>
    </source>
</evidence>
<comment type="function">
    <text evidence="1">Catalyzes the desulfonation of aliphatic sulfonates.</text>
</comment>
<comment type="catalytic activity">
    <reaction evidence="1">
        <text>an alkanesulfonate + FMNH2 + O2 = an aldehyde + FMN + sulfite + H2O + 2 H(+)</text>
        <dbReference type="Rhea" id="RHEA:23064"/>
        <dbReference type="ChEBI" id="CHEBI:15377"/>
        <dbReference type="ChEBI" id="CHEBI:15378"/>
        <dbReference type="ChEBI" id="CHEBI:15379"/>
        <dbReference type="ChEBI" id="CHEBI:17359"/>
        <dbReference type="ChEBI" id="CHEBI:17478"/>
        <dbReference type="ChEBI" id="CHEBI:57618"/>
        <dbReference type="ChEBI" id="CHEBI:58210"/>
        <dbReference type="ChEBI" id="CHEBI:134249"/>
        <dbReference type="EC" id="1.14.14.5"/>
    </reaction>
</comment>
<comment type="subunit">
    <text evidence="1">Homotetramer.</text>
</comment>
<comment type="miscellaneous">
    <text evidence="1">FMNH(2) which is absolutely required for this enzymatic reaction, is provided by SsuE.</text>
</comment>
<comment type="similarity">
    <text evidence="1">Belongs to the SsuD family.</text>
</comment>
<keyword id="KW-0285">Flavoprotein</keyword>
<keyword id="KW-0288">FMN</keyword>
<keyword id="KW-0503">Monooxygenase</keyword>
<keyword id="KW-0560">Oxidoreductase</keyword>
<keyword id="KW-1185">Reference proteome</keyword>
<protein>
    <recommendedName>
        <fullName evidence="1">Alkanesulfonate monooxygenase</fullName>
        <ecNumber evidence="1">1.14.14.5</ecNumber>
    </recommendedName>
    <alternativeName>
        <fullName evidence="1">FMNH2-dependent aliphatic sulfonate monooxygenase</fullName>
    </alternativeName>
</protein>
<dbReference type="EC" id="1.14.14.5" evidence="1"/>
<dbReference type="EMBL" id="CP000800">
    <property type="protein sequence ID" value="ABV16534.1"/>
    <property type="molecule type" value="Genomic_DNA"/>
</dbReference>
<dbReference type="RefSeq" id="WP_000055996.1">
    <property type="nucleotide sequence ID" value="NC_009801.1"/>
</dbReference>
<dbReference type="SMR" id="A7ZK27"/>
<dbReference type="GeneID" id="75204026"/>
<dbReference type="KEGG" id="ecw:EcE24377A_1037"/>
<dbReference type="HOGENOM" id="CLU_027853_1_0_6"/>
<dbReference type="Proteomes" id="UP000001122">
    <property type="component" value="Chromosome"/>
</dbReference>
<dbReference type="GO" id="GO:0008726">
    <property type="term" value="F:alkanesulfonate monooxygenase activity"/>
    <property type="evidence" value="ECO:0007669"/>
    <property type="project" value="UniProtKB-UniRule"/>
</dbReference>
<dbReference type="GO" id="GO:0046306">
    <property type="term" value="P:alkanesulfonate catabolic process"/>
    <property type="evidence" value="ECO:0007669"/>
    <property type="project" value="TreeGrafter"/>
</dbReference>
<dbReference type="CDD" id="cd01094">
    <property type="entry name" value="Alkanesulfonate_monoxygenase"/>
    <property type="match status" value="1"/>
</dbReference>
<dbReference type="FunFam" id="3.20.20.30:FF:000001">
    <property type="entry name" value="Alkanesulfonate monooxygenase"/>
    <property type="match status" value="1"/>
</dbReference>
<dbReference type="Gene3D" id="3.20.20.30">
    <property type="entry name" value="Luciferase-like domain"/>
    <property type="match status" value="1"/>
</dbReference>
<dbReference type="HAMAP" id="MF_01229">
    <property type="entry name" value="Alkanesulf_monooxygen"/>
    <property type="match status" value="1"/>
</dbReference>
<dbReference type="InterPro" id="IPR019911">
    <property type="entry name" value="Alkanesulphonate_mOase_FMN-dep"/>
</dbReference>
<dbReference type="InterPro" id="IPR011251">
    <property type="entry name" value="Luciferase-like_dom"/>
</dbReference>
<dbReference type="InterPro" id="IPR036661">
    <property type="entry name" value="Luciferase-like_sf"/>
</dbReference>
<dbReference type="InterPro" id="IPR050172">
    <property type="entry name" value="SsuD_RutA_monooxygenase"/>
</dbReference>
<dbReference type="NCBIfam" id="TIGR03565">
    <property type="entry name" value="alk_sulf_monoox"/>
    <property type="match status" value="1"/>
</dbReference>
<dbReference type="NCBIfam" id="NF001939">
    <property type="entry name" value="PRK00719.1"/>
    <property type="match status" value="1"/>
</dbReference>
<dbReference type="PANTHER" id="PTHR42847">
    <property type="entry name" value="ALKANESULFONATE MONOOXYGENASE"/>
    <property type="match status" value="1"/>
</dbReference>
<dbReference type="PANTHER" id="PTHR42847:SF4">
    <property type="entry name" value="ALKANESULFONATE MONOOXYGENASE-RELATED"/>
    <property type="match status" value="1"/>
</dbReference>
<dbReference type="Pfam" id="PF00296">
    <property type="entry name" value="Bac_luciferase"/>
    <property type="match status" value="1"/>
</dbReference>
<dbReference type="SUPFAM" id="SSF51679">
    <property type="entry name" value="Bacterial luciferase-like"/>
    <property type="match status" value="1"/>
</dbReference>